<organism>
    <name type="scientific">Staphylococcus aureus (strain COL)</name>
    <dbReference type="NCBI Taxonomy" id="93062"/>
    <lineage>
        <taxon>Bacteria</taxon>
        <taxon>Bacillati</taxon>
        <taxon>Bacillota</taxon>
        <taxon>Bacilli</taxon>
        <taxon>Bacillales</taxon>
        <taxon>Staphylococcaceae</taxon>
        <taxon>Staphylococcus</taxon>
    </lineage>
</organism>
<accession>Q5HGQ2</accession>
<name>RSMH_STAAC</name>
<dbReference type="EC" id="2.1.1.199" evidence="1"/>
<dbReference type="EMBL" id="CP000046">
    <property type="protein sequence ID" value="AAW36571.1"/>
    <property type="molecule type" value="Genomic_DNA"/>
</dbReference>
<dbReference type="RefSeq" id="WP_000468389.1">
    <property type="nucleotide sequence ID" value="NZ_JBGOFO010000002.1"/>
</dbReference>
<dbReference type="SMR" id="Q5HGQ2"/>
<dbReference type="KEGG" id="sac:SACOL1192"/>
<dbReference type="HOGENOM" id="CLU_038422_2_0_9"/>
<dbReference type="Proteomes" id="UP000000530">
    <property type="component" value="Chromosome"/>
</dbReference>
<dbReference type="GO" id="GO:0005737">
    <property type="term" value="C:cytoplasm"/>
    <property type="evidence" value="ECO:0007669"/>
    <property type="project" value="UniProtKB-SubCell"/>
</dbReference>
<dbReference type="GO" id="GO:0071424">
    <property type="term" value="F:rRNA (cytosine-N4-)-methyltransferase activity"/>
    <property type="evidence" value="ECO:0007669"/>
    <property type="project" value="UniProtKB-UniRule"/>
</dbReference>
<dbReference type="GO" id="GO:0070475">
    <property type="term" value="P:rRNA base methylation"/>
    <property type="evidence" value="ECO:0007669"/>
    <property type="project" value="UniProtKB-UniRule"/>
</dbReference>
<dbReference type="FunFam" id="1.10.150.170:FF:000001">
    <property type="entry name" value="Ribosomal RNA small subunit methyltransferase H"/>
    <property type="match status" value="1"/>
</dbReference>
<dbReference type="Gene3D" id="1.10.150.170">
    <property type="entry name" value="Putative methyltransferase TM0872, insert domain"/>
    <property type="match status" value="1"/>
</dbReference>
<dbReference type="Gene3D" id="3.40.50.150">
    <property type="entry name" value="Vaccinia Virus protein VP39"/>
    <property type="match status" value="1"/>
</dbReference>
<dbReference type="HAMAP" id="MF_01007">
    <property type="entry name" value="16SrRNA_methyltr_H"/>
    <property type="match status" value="1"/>
</dbReference>
<dbReference type="InterPro" id="IPR002903">
    <property type="entry name" value="RsmH"/>
</dbReference>
<dbReference type="InterPro" id="IPR023397">
    <property type="entry name" value="SAM-dep_MeTrfase_MraW_recog"/>
</dbReference>
<dbReference type="InterPro" id="IPR029063">
    <property type="entry name" value="SAM-dependent_MTases_sf"/>
</dbReference>
<dbReference type="NCBIfam" id="TIGR00006">
    <property type="entry name" value="16S rRNA (cytosine(1402)-N(4))-methyltransferase RsmH"/>
    <property type="match status" value="1"/>
</dbReference>
<dbReference type="PANTHER" id="PTHR11265:SF0">
    <property type="entry name" value="12S RRNA N4-METHYLCYTIDINE METHYLTRANSFERASE"/>
    <property type="match status" value="1"/>
</dbReference>
<dbReference type="PANTHER" id="PTHR11265">
    <property type="entry name" value="S-ADENOSYL-METHYLTRANSFERASE MRAW"/>
    <property type="match status" value="1"/>
</dbReference>
<dbReference type="Pfam" id="PF01795">
    <property type="entry name" value="Methyltransf_5"/>
    <property type="match status" value="1"/>
</dbReference>
<dbReference type="PIRSF" id="PIRSF004486">
    <property type="entry name" value="MraW"/>
    <property type="match status" value="1"/>
</dbReference>
<dbReference type="SUPFAM" id="SSF81799">
    <property type="entry name" value="Putative methyltransferase TM0872, insert domain"/>
    <property type="match status" value="1"/>
</dbReference>
<dbReference type="SUPFAM" id="SSF53335">
    <property type="entry name" value="S-adenosyl-L-methionine-dependent methyltransferases"/>
    <property type="match status" value="1"/>
</dbReference>
<protein>
    <recommendedName>
        <fullName evidence="1">Ribosomal RNA small subunit methyltransferase H</fullName>
        <ecNumber evidence="1">2.1.1.199</ecNumber>
    </recommendedName>
    <alternativeName>
        <fullName evidence="1">16S rRNA m(4)C1402 methyltransferase</fullName>
    </alternativeName>
    <alternativeName>
        <fullName evidence="1">rRNA (cytosine-N(4)-)-methyltransferase RsmH</fullName>
    </alternativeName>
</protein>
<comment type="function">
    <text evidence="1">Specifically methylates the N4 position of cytidine in position 1402 (C1402) of 16S rRNA.</text>
</comment>
<comment type="catalytic activity">
    <reaction evidence="1">
        <text>cytidine(1402) in 16S rRNA + S-adenosyl-L-methionine = N(4)-methylcytidine(1402) in 16S rRNA + S-adenosyl-L-homocysteine + H(+)</text>
        <dbReference type="Rhea" id="RHEA:42928"/>
        <dbReference type="Rhea" id="RHEA-COMP:10286"/>
        <dbReference type="Rhea" id="RHEA-COMP:10287"/>
        <dbReference type="ChEBI" id="CHEBI:15378"/>
        <dbReference type="ChEBI" id="CHEBI:57856"/>
        <dbReference type="ChEBI" id="CHEBI:59789"/>
        <dbReference type="ChEBI" id="CHEBI:74506"/>
        <dbReference type="ChEBI" id="CHEBI:82748"/>
        <dbReference type="EC" id="2.1.1.199"/>
    </reaction>
</comment>
<comment type="subcellular location">
    <subcellularLocation>
        <location evidence="1">Cytoplasm</location>
    </subcellularLocation>
</comment>
<comment type="similarity">
    <text evidence="1">Belongs to the methyltransferase superfamily. RsmH family.</text>
</comment>
<keyword id="KW-0963">Cytoplasm</keyword>
<keyword id="KW-0489">Methyltransferase</keyword>
<keyword id="KW-0698">rRNA processing</keyword>
<keyword id="KW-0949">S-adenosyl-L-methionine</keyword>
<keyword id="KW-0808">Transferase</keyword>
<sequence length="311" mass="35710">MFHHISVMLNETIDYLNVKENGVYIDCTLGGAGHALYLLNQLNDDGRLIAIDQDQTAIDNAKEVLKDHLHRVTFVHSNFRELTQILKDLNIEKVDGIYYDLGVSSPQLDIPERGFSYHHDATLDMRMDQTQELTAYEIVNNWSYEALVKIFYRYGEEKFSKQIARRIEAHREQQPITTTLELVDIIKEGIPAKARRKGGHPAKRVFQALRIAVNDELSAFEDSIEQAIELVKVDGRISVITFHSLEDRLCKQVFQEYEKGPEVPRGLPVIPEAYTPKLKRVNRKPITATEEDLDDNNRARSAKLRVAEILK</sequence>
<evidence type="ECO:0000255" key="1">
    <source>
        <dbReference type="HAMAP-Rule" id="MF_01007"/>
    </source>
</evidence>
<gene>
    <name evidence="1" type="primary">rsmH</name>
    <name type="synonym">mraW</name>
    <name type="ordered locus">SACOL1192</name>
</gene>
<proteinExistence type="inferred from homology"/>
<feature type="chain" id="PRO_0000108705" description="Ribosomal RNA small subunit methyltransferase H">
    <location>
        <begin position="1"/>
        <end position="311"/>
    </location>
</feature>
<feature type="binding site" evidence="1">
    <location>
        <begin position="32"/>
        <end position="34"/>
    </location>
    <ligand>
        <name>S-adenosyl-L-methionine</name>
        <dbReference type="ChEBI" id="CHEBI:59789"/>
    </ligand>
</feature>
<feature type="binding site" evidence="1">
    <location>
        <position position="52"/>
    </location>
    <ligand>
        <name>S-adenosyl-L-methionine</name>
        <dbReference type="ChEBI" id="CHEBI:59789"/>
    </ligand>
</feature>
<feature type="binding site" evidence="1">
    <location>
        <position position="79"/>
    </location>
    <ligand>
        <name>S-adenosyl-L-methionine</name>
        <dbReference type="ChEBI" id="CHEBI:59789"/>
    </ligand>
</feature>
<feature type="binding site" evidence="1">
    <location>
        <position position="100"/>
    </location>
    <ligand>
        <name>S-adenosyl-L-methionine</name>
        <dbReference type="ChEBI" id="CHEBI:59789"/>
    </ligand>
</feature>
<feature type="binding site" evidence="1">
    <location>
        <position position="107"/>
    </location>
    <ligand>
        <name>S-adenosyl-L-methionine</name>
        <dbReference type="ChEBI" id="CHEBI:59789"/>
    </ligand>
</feature>
<reference key="1">
    <citation type="journal article" date="2005" name="J. Bacteriol.">
        <title>Insights on evolution of virulence and resistance from the complete genome analysis of an early methicillin-resistant Staphylococcus aureus strain and a biofilm-producing methicillin-resistant Staphylococcus epidermidis strain.</title>
        <authorList>
            <person name="Gill S.R."/>
            <person name="Fouts D.E."/>
            <person name="Archer G.L."/>
            <person name="Mongodin E.F."/>
            <person name="DeBoy R.T."/>
            <person name="Ravel J."/>
            <person name="Paulsen I.T."/>
            <person name="Kolonay J.F."/>
            <person name="Brinkac L.M."/>
            <person name="Beanan M.J."/>
            <person name="Dodson R.J."/>
            <person name="Daugherty S.C."/>
            <person name="Madupu R."/>
            <person name="Angiuoli S.V."/>
            <person name="Durkin A.S."/>
            <person name="Haft D.H."/>
            <person name="Vamathevan J.J."/>
            <person name="Khouri H."/>
            <person name="Utterback T.R."/>
            <person name="Lee C."/>
            <person name="Dimitrov G."/>
            <person name="Jiang L."/>
            <person name="Qin H."/>
            <person name="Weidman J."/>
            <person name="Tran K."/>
            <person name="Kang K.H."/>
            <person name="Hance I.R."/>
            <person name="Nelson K.E."/>
            <person name="Fraser C.M."/>
        </authorList>
    </citation>
    <scope>NUCLEOTIDE SEQUENCE [LARGE SCALE GENOMIC DNA]</scope>
    <source>
        <strain>COL</strain>
    </source>
</reference>